<gene>
    <name type="primary">emc2-a</name>
    <name type="synonym">ttc35-a</name>
</gene>
<accession>Q6INS3</accession>
<feature type="chain" id="PRO_0000333733" description="ER membrane protein complex subunit 2-A">
    <location>
        <begin position="1"/>
        <end position="297"/>
    </location>
</feature>
<feature type="repeat" description="TPR 1" evidence="2">
    <location>
        <begin position="87"/>
        <end position="120"/>
    </location>
</feature>
<feature type="repeat" description="TPR 2" evidence="2">
    <location>
        <begin position="155"/>
        <end position="188"/>
    </location>
</feature>
<feature type="repeat" description="TPR 3" evidence="2">
    <location>
        <begin position="192"/>
        <end position="225"/>
    </location>
</feature>
<dbReference type="EMBL" id="BC072200">
    <property type="protein sequence ID" value="AAH72200.1"/>
    <property type="molecule type" value="mRNA"/>
</dbReference>
<dbReference type="RefSeq" id="NP_001085171.1">
    <property type="nucleotide sequence ID" value="NM_001091702.1"/>
</dbReference>
<dbReference type="SMR" id="Q6INS3"/>
<dbReference type="BioGRID" id="101620">
    <property type="interactions" value="1"/>
</dbReference>
<dbReference type="IntAct" id="Q6INS3">
    <property type="interactions" value="1"/>
</dbReference>
<dbReference type="DNASU" id="432254"/>
<dbReference type="GeneID" id="432254"/>
<dbReference type="KEGG" id="xla:432254"/>
<dbReference type="AGR" id="Xenbase:XB-GENE-6255734"/>
<dbReference type="CTD" id="432254"/>
<dbReference type="Xenbase" id="XB-GENE-6255734">
    <property type="gene designation" value="emc2.L"/>
</dbReference>
<dbReference type="OMA" id="MSDQEGW"/>
<dbReference type="OrthoDB" id="124397at2759"/>
<dbReference type="Proteomes" id="UP000186698">
    <property type="component" value="Chromosome 6L"/>
</dbReference>
<dbReference type="Bgee" id="432254">
    <property type="expression patterns" value="Expressed in brain and 19 other cell types or tissues"/>
</dbReference>
<dbReference type="GO" id="GO:0005737">
    <property type="term" value="C:cytoplasm"/>
    <property type="evidence" value="ECO:0000250"/>
    <property type="project" value="UniProtKB"/>
</dbReference>
<dbReference type="GO" id="GO:0072546">
    <property type="term" value="C:EMC complex"/>
    <property type="evidence" value="ECO:0000250"/>
    <property type="project" value="UniProtKB"/>
</dbReference>
<dbReference type="GO" id="GO:0005783">
    <property type="term" value="C:endoplasmic reticulum"/>
    <property type="evidence" value="ECO:0000250"/>
    <property type="project" value="UniProtKB"/>
</dbReference>
<dbReference type="GO" id="GO:0005789">
    <property type="term" value="C:endoplasmic reticulum membrane"/>
    <property type="evidence" value="ECO:0000250"/>
    <property type="project" value="UniProtKB"/>
</dbReference>
<dbReference type="GO" id="GO:0042406">
    <property type="term" value="C:extrinsic component of endoplasmic reticulum membrane"/>
    <property type="evidence" value="ECO:0000250"/>
    <property type="project" value="UniProtKB"/>
</dbReference>
<dbReference type="GO" id="GO:0045050">
    <property type="term" value="P:protein insertion into ER membrane by stop-transfer membrane-anchor sequence"/>
    <property type="evidence" value="ECO:0000250"/>
    <property type="project" value="UniProtKB"/>
</dbReference>
<dbReference type="GO" id="GO:0071816">
    <property type="term" value="P:tail-anchored membrane protein insertion into ER membrane"/>
    <property type="evidence" value="ECO:0000250"/>
    <property type="project" value="UniProtKB"/>
</dbReference>
<dbReference type="FunFam" id="1.25.40.10:FF:000074">
    <property type="entry name" value="ER membrane protein complex subunit 2"/>
    <property type="match status" value="1"/>
</dbReference>
<dbReference type="Gene3D" id="1.25.40.10">
    <property type="entry name" value="Tetratricopeptide repeat domain"/>
    <property type="match status" value="2"/>
</dbReference>
<dbReference type="InterPro" id="IPR039856">
    <property type="entry name" value="EMC2-like"/>
</dbReference>
<dbReference type="InterPro" id="IPR011990">
    <property type="entry name" value="TPR-like_helical_dom_sf"/>
</dbReference>
<dbReference type="InterPro" id="IPR055217">
    <property type="entry name" value="TPR_EMC2"/>
</dbReference>
<dbReference type="InterPro" id="IPR019734">
    <property type="entry name" value="TPR_rpt"/>
</dbReference>
<dbReference type="PANTHER" id="PTHR12760">
    <property type="entry name" value="TETRATRICOPEPTIDE REPEAT PROTEIN"/>
    <property type="match status" value="1"/>
</dbReference>
<dbReference type="Pfam" id="PF22890">
    <property type="entry name" value="TPR_EMC2"/>
    <property type="match status" value="1"/>
</dbReference>
<dbReference type="SUPFAM" id="SSF48452">
    <property type="entry name" value="TPR-like"/>
    <property type="match status" value="1"/>
</dbReference>
<dbReference type="PROSITE" id="PS50005">
    <property type="entry name" value="TPR"/>
    <property type="match status" value="2"/>
</dbReference>
<dbReference type="PROSITE" id="PS50293">
    <property type="entry name" value="TPR_REGION"/>
    <property type="match status" value="1"/>
</dbReference>
<evidence type="ECO:0000250" key="1">
    <source>
        <dbReference type="UniProtKB" id="Q15006"/>
    </source>
</evidence>
<evidence type="ECO:0000255" key="2"/>
<evidence type="ECO:0000305" key="3"/>
<proteinExistence type="evidence at transcript level"/>
<keyword id="KW-0256">Endoplasmic reticulum</keyword>
<keyword id="KW-0472">Membrane</keyword>
<keyword id="KW-1185">Reference proteome</keyword>
<keyword id="KW-0677">Repeat</keyword>
<keyword id="KW-0802">TPR repeat</keyword>
<comment type="function">
    <text evidence="1">Part of the endoplasmic reticulum membrane protein complex (EMC) that enables the energy-independent insertion into endoplasmic reticulum membranes of newly synthesized membrane proteins. Preferentially accommodates proteins with transmembrane domains that are weakly hydrophobic or contain destabilizing features such as charged and aromatic residues. Involved in the cotranslational insertion of multi-pass membrane proteins in which stop-transfer membrane-anchor sequences become ER membrane spanning helices. It is also required for the post-translational insertion of tail-anchored/TA proteins in endoplasmic reticulum membranes. By mediating the proper cotranslational insertion of N-terminal transmembrane domains in an N-exo topology, with translocated N-terminus in the lumen of the ER, controls the topology of multi-pass membrane proteins. By regulating the insertion of various proteins in membranes, it is indirectly involved in many cellular processes.</text>
</comment>
<comment type="subunit">
    <text evidence="1">Component of the ER membrane protein complex (EMC).</text>
</comment>
<comment type="subcellular location">
    <subcellularLocation>
        <location evidence="1">Endoplasmic reticulum membrane</location>
        <topology evidence="1">Peripheral membrane protein</topology>
        <orientation evidence="1">Cytoplasmic side</orientation>
    </subcellularLocation>
</comment>
<comment type="similarity">
    <text evidence="3">Belongs to the EMC2 family.</text>
</comment>
<sequence length="297" mass="34594">MSKVSDLFDVTWEDMRDKMKTWREENYRNSEHVIEVGEELINEHASKLGDDIWIIYEQVMIAALDCGRDDIAMSCLQELRRQFPGSHRVKRLTGLRFEAMERYDDALQIYDRILQDDPTNTAARKRKIAIRKAQGRNSEAIRELNEYLEQFVGDQEAWHELAELYINELDYAKAAFCLEELILTNPHNHFYYQQFAEVKYTQGGLENLELSRKYFSQALKLNNHNMRALFGLYISSVHIASNPKASAKMKKDNVKYATWAASQIKKAYQLAGRTMTDTQTSLKAVEDMLETLQITQS</sequence>
<protein>
    <recommendedName>
        <fullName evidence="3">ER membrane protein complex subunit 2-A</fullName>
    </recommendedName>
    <alternativeName>
        <fullName>Tetratricopeptide repeat protein 35-A</fullName>
        <shortName>TPR repeat protein 35-A</shortName>
    </alternativeName>
</protein>
<organism>
    <name type="scientific">Xenopus laevis</name>
    <name type="common">African clawed frog</name>
    <dbReference type="NCBI Taxonomy" id="8355"/>
    <lineage>
        <taxon>Eukaryota</taxon>
        <taxon>Metazoa</taxon>
        <taxon>Chordata</taxon>
        <taxon>Craniata</taxon>
        <taxon>Vertebrata</taxon>
        <taxon>Euteleostomi</taxon>
        <taxon>Amphibia</taxon>
        <taxon>Batrachia</taxon>
        <taxon>Anura</taxon>
        <taxon>Pipoidea</taxon>
        <taxon>Pipidae</taxon>
        <taxon>Xenopodinae</taxon>
        <taxon>Xenopus</taxon>
        <taxon>Xenopus</taxon>
    </lineage>
</organism>
<reference key="1">
    <citation type="submission" date="2004-06" db="EMBL/GenBank/DDBJ databases">
        <authorList>
            <consortium name="NIH - Xenopus Gene Collection (XGC) project"/>
        </authorList>
    </citation>
    <scope>NUCLEOTIDE SEQUENCE [LARGE SCALE MRNA]</scope>
    <source>
        <tissue>Ovary</tissue>
    </source>
</reference>
<name>EMC2A_XENLA</name>